<name>RNFH_HAEIE</name>
<gene>
    <name evidence="1" type="primary">rnfH</name>
    <name type="ordered locus">CGSHiEE_01020</name>
</gene>
<organism>
    <name type="scientific">Haemophilus influenzae (strain PittEE)</name>
    <dbReference type="NCBI Taxonomy" id="374930"/>
    <lineage>
        <taxon>Bacteria</taxon>
        <taxon>Pseudomonadati</taxon>
        <taxon>Pseudomonadota</taxon>
        <taxon>Gammaproteobacteria</taxon>
        <taxon>Pasteurellales</taxon>
        <taxon>Pasteurellaceae</taxon>
        <taxon>Haemophilus</taxon>
    </lineage>
</organism>
<feature type="chain" id="PRO_1000013575" description="Protein RnfH">
    <location>
        <begin position="1"/>
        <end position="102"/>
    </location>
</feature>
<reference key="1">
    <citation type="journal article" date="2007" name="Genome Biol.">
        <title>Characterization and modeling of the Haemophilus influenzae core and supragenomes based on the complete genomic sequences of Rd and 12 clinical nontypeable strains.</title>
        <authorList>
            <person name="Hogg J.S."/>
            <person name="Hu F.Z."/>
            <person name="Janto B."/>
            <person name="Boissy R."/>
            <person name="Hayes J."/>
            <person name="Keefe R."/>
            <person name="Post J.C."/>
            <person name="Ehrlich G.D."/>
        </authorList>
    </citation>
    <scope>NUCLEOTIDE SEQUENCE [LARGE SCALE GENOMIC DNA]</scope>
    <source>
        <strain>PittEE</strain>
    </source>
</reference>
<sequence>MNQINIEIAYAFPERYYLKSFQVDEGITVQTAITQSGILSQFPEIDLSTNKIGIFSRPIKLTDVLKEGDRIEIYRPLLADPKEIRRKRAAEQAAAKNKEKGA</sequence>
<accession>A5UA93</accession>
<comment type="similarity">
    <text evidence="1">Belongs to the UPF0125 (RnfH) family.</text>
</comment>
<proteinExistence type="inferred from homology"/>
<dbReference type="EMBL" id="CP000671">
    <property type="protein sequence ID" value="ABQ97694.1"/>
    <property type="molecule type" value="Genomic_DNA"/>
</dbReference>
<dbReference type="SMR" id="A5UA93"/>
<dbReference type="KEGG" id="hip:CGSHiEE_01020"/>
<dbReference type="HOGENOM" id="CLU_150721_1_0_6"/>
<dbReference type="Gene3D" id="3.10.20.280">
    <property type="entry name" value="RnfH-like"/>
    <property type="match status" value="1"/>
</dbReference>
<dbReference type="HAMAP" id="MF_00460">
    <property type="entry name" value="UPF0125_RnfH"/>
    <property type="match status" value="1"/>
</dbReference>
<dbReference type="InterPro" id="IPR016155">
    <property type="entry name" value="Mopterin_synth/thiamin_S_b"/>
</dbReference>
<dbReference type="InterPro" id="IPR005346">
    <property type="entry name" value="RnfH"/>
</dbReference>
<dbReference type="InterPro" id="IPR037021">
    <property type="entry name" value="RnfH_sf"/>
</dbReference>
<dbReference type="NCBIfam" id="NF002490">
    <property type="entry name" value="PRK01777.1"/>
    <property type="match status" value="1"/>
</dbReference>
<dbReference type="PANTHER" id="PTHR37483">
    <property type="entry name" value="UPF0125 PROTEIN RATB"/>
    <property type="match status" value="1"/>
</dbReference>
<dbReference type="PANTHER" id="PTHR37483:SF1">
    <property type="entry name" value="UPF0125 PROTEIN RATB"/>
    <property type="match status" value="1"/>
</dbReference>
<dbReference type="Pfam" id="PF03658">
    <property type="entry name" value="Ub-RnfH"/>
    <property type="match status" value="1"/>
</dbReference>
<dbReference type="SUPFAM" id="SSF54285">
    <property type="entry name" value="MoaD/ThiS"/>
    <property type="match status" value="1"/>
</dbReference>
<evidence type="ECO:0000255" key="1">
    <source>
        <dbReference type="HAMAP-Rule" id="MF_00460"/>
    </source>
</evidence>
<protein>
    <recommendedName>
        <fullName evidence="1">Protein RnfH</fullName>
    </recommendedName>
</protein>